<proteinExistence type="inferred from homology"/>
<organism>
    <name type="scientific">Burkholderia lata (strain ATCC 17760 / DSM 23089 / LMG 22485 / NCIMB 9086 / R18194 / 383)</name>
    <dbReference type="NCBI Taxonomy" id="482957"/>
    <lineage>
        <taxon>Bacteria</taxon>
        <taxon>Pseudomonadati</taxon>
        <taxon>Pseudomonadota</taxon>
        <taxon>Betaproteobacteria</taxon>
        <taxon>Burkholderiales</taxon>
        <taxon>Burkholderiaceae</taxon>
        <taxon>Burkholderia</taxon>
        <taxon>Burkholderia cepacia complex</taxon>
    </lineage>
</organism>
<evidence type="ECO:0000255" key="1">
    <source>
        <dbReference type="HAMAP-Rule" id="MF_00567"/>
    </source>
</evidence>
<dbReference type="EC" id="2.5.1.72" evidence="1"/>
<dbReference type="EMBL" id="CP000151">
    <property type="protein sequence ID" value="ABB09432.1"/>
    <property type="molecule type" value="Genomic_DNA"/>
</dbReference>
<dbReference type="RefSeq" id="WP_011352954.1">
    <property type="nucleotide sequence ID" value="NC_007510.1"/>
</dbReference>
<dbReference type="SMR" id="Q39DN4"/>
<dbReference type="GeneID" id="45095723"/>
<dbReference type="KEGG" id="bur:Bcep18194_A5838"/>
<dbReference type="PATRIC" id="fig|482957.22.peg.2825"/>
<dbReference type="HOGENOM" id="CLU_047382_1_0_4"/>
<dbReference type="UniPathway" id="UPA00253">
    <property type="reaction ID" value="UER00327"/>
</dbReference>
<dbReference type="Proteomes" id="UP000002705">
    <property type="component" value="Chromosome 1"/>
</dbReference>
<dbReference type="GO" id="GO:0005829">
    <property type="term" value="C:cytosol"/>
    <property type="evidence" value="ECO:0007669"/>
    <property type="project" value="TreeGrafter"/>
</dbReference>
<dbReference type="GO" id="GO:0051539">
    <property type="term" value="F:4 iron, 4 sulfur cluster binding"/>
    <property type="evidence" value="ECO:0007669"/>
    <property type="project" value="UniProtKB-KW"/>
</dbReference>
<dbReference type="GO" id="GO:0046872">
    <property type="term" value="F:metal ion binding"/>
    <property type="evidence" value="ECO:0007669"/>
    <property type="project" value="UniProtKB-KW"/>
</dbReference>
<dbReference type="GO" id="GO:0008987">
    <property type="term" value="F:quinolinate synthetase A activity"/>
    <property type="evidence" value="ECO:0007669"/>
    <property type="project" value="UniProtKB-UniRule"/>
</dbReference>
<dbReference type="GO" id="GO:0034628">
    <property type="term" value="P:'de novo' NAD biosynthetic process from L-aspartate"/>
    <property type="evidence" value="ECO:0007669"/>
    <property type="project" value="TreeGrafter"/>
</dbReference>
<dbReference type="FunFam" id="3.40.50.10800:FF:000001">
    <property type="entry name" value="Quinolinate synthase A"/>
    <property type="match status" value="1"/>
</dbReference>
<dbReference type="FunFam" id="3.40.50.10800:FF:000003">
    <property type="entry name" value="Quinolinate synthase A"/>
    <property type="match status" value="1"/>
</dbReference>
<dbReference type="Gene3D" id="3.40.50.10800">
    <property type="entry name" value="NadA-like"/>
    <property type="match status" value="3"/>
</dbReference>
<dbReference type="HAMAP" id="MF_00567">
    <property type="entry name" value="NadA_type1"/>
    <property type="match status" value="1"/>
</dbReference>
<dbReference type="InterPro" id="IPR003473">
    <property type="entry name" value="NadA"/>
</dbReference>
<dbReference type="InterPro" id="IPR036094">
    <property type="entry name" value="NadA_sf"/>
</dbReference>
<dbReference type="InterPro" id="IPR023513">
    <property type="entry name" value="Quinolinate_synth_A_type1"/>
</dbReference>
<dbReference type="NCBIfam" id="TIGR00550">
    <property type="entry name" value="nadA"/>
    <property type="match status" value="1"/>
</dbReference>
<dbReference type="NCBIfam" id="NF006877">
    <property type="entry name" value="PRK09375.1-1"/>
    <property type="match status" value="1"/>
</dbReference>
<dbReference type="NCBIfam" id="NF006878">
    <property type="entry name" value="PRK09375.1-2"/>
    <property type="match status" value="1"/>
</dbReference>
<dbReference type="PANTHER" id="PTHR30573:SF0">
    <property type="entry name" value="QUINOLINATE SYNTHASE, CHLOROPLASTIC"/>
    <property type="match status" value="1"/>
</dbReference>
<dbReference type="PANTHER" id="PTHR30573">
    <property type="entry name" value="QUINOLINATE SYNTHETASE A"/>
    <property type="match status" value="1"/>
</dbReference>
<dbReference type="Pfam" id="PF02445">
    <property type="entry name" value="NadA"/>
    <property type="match status" value="1"/>
</dbReference>
<dbReference type="SUPFAM" id="SSF142754">
    <property type="entry name" value="NadA-like"/>
    <property type="match status" value="1"/>
</dbReference>
<accession>Q39DN4</accession>
<name>NADA_BURL3</name>
<keyword id="KW-0004">4Fe-4S</keyword>
<keyword id="KW-0963">Cytoplasm</keyword>
<keyword id="KW-0408">Iron</keyword>
<keyword id="KW-0411">Iron-sulfur</keyword>
<keyword id="KW-0479">Metal-binding</keyword>
<keyword id="KW-0662">Pyridine nucleotide biosynthesis</keyword>
<keyword id="KW-0808">Transferase</keyword>
<reference key="1">
    <citation type="submission" date="2005-10" db="EMBL/GenBank/DDBJ databases">
        <title>Complete sequence of chromosome 1 of Burkholderia sp. 383.</title>
        <authorList>
            <consortium name="US DOE Joint Genome Institute"/>
            <person name="Copeland A."/>
            <person name="Lucas S."/>
            <person name="Lapidus A."/>
            <person name="Barry K."/>
            <person name="Detter J.C."/>
            <person name="Glavina T."/>
            <person name="Hammon N."/>
            <person name="Israni S."/>
            <person name="Pitluck S."/>
            <person name="Chain P."/>
            <person name="Malfatti S."/>
            <person name="Shin M."/>
            <person name="Vergez L."/>
            <person name="Schmutz J."/>
            <person name="Larimer F."/>
            <person name="Land M."/>
            <person name="Kyrpides N."/>
            <person name="Lykidis A."/>
            <person name="Richardson P."/>
        </authorList>
    </citation>
    <scope>NUCLEOTIDE SEQUENCE [LARGE SCALE GENOMIC DNA]</scope>
    <source>
        <strain>ATCC 17760 / DSM 23089 / LMG 22485 / NCIMB 9086 / R18194 / 383</strain>
    </source>
</reference>
<protein>
    <recommendedName>
        <fullName evidence="1">Quinolinate synthase</fullName>
        <ecNumber evidence="1">2.5.1.72</ecNumber>
    </recommendedName>
</protein>
<feature type="chain" id="PRO_1000024951" description="Quinolinate synthase">
    <location>
        <begin position="1"/>
        <end position="378"/>
    </location>
</feature>
<feature type="binding site" evidence="1">
    <location>
        <position position="59"/>
    </location>
    <ligand>
        <name>iminosuccinate</name>
        <dbReference type="ChEBI" id="CHEBI:77875"/>
    </ligand>
</feature>
<feature type="binding site" evidence="1">
    <location>
        <position position="80"/>
    </location>
    <ligand>
        <name>iminosuccinate</name>
        <dbReference type="ChEBI" id="CHEBI:77875"/>
    </ligand>
</feature>
<feature type="binding site" evidence="1">
    <location>
        <position position="125"/>
    </location>
    <ligand>
        <name>[4Fe-4S] cluster</name>
        <dbReference type="ChEBI" id="CHEBI:49883"/>
    </ligand>
</feature>
<feature type="binding site" evidence="1">
    <location>
        <begin position="151"/>
        <end position="153"/>
    </location>
    <ligand>
        <name>iminosuccinate</name>
        <dbReference type="ChEBI" id="CHEBI:77875"/>
    </ligand>
</feature>
<feature type="binding site" evidence="1">
    <location>
        <position position="168"/>
    </location>
    <ligand>
        <name>iminosuccinate</name>
        <dbReference type="ChEBI" id="CHEBI:77875"/>
    </ligand>
</feature>
<feature type="binding site" evidence="1">
    <location>
        <position position="212"/>
    </location>
    <ligand>
        <name>[4Fe-4S] cluster</name>
        <dbReference type="ChEBI" id="CHEBI:49883"/>
    </ligand>
</feature>
<feature type="binding site" evidence="1">
    <location>
        <begin position="238"/>
        <end position="240"/>
    </location>
    <ligand>
        <name>iminosuccinate</name>
        <dbReference type="ChEBI" id="CHEBI:77875"/>
    </ligand>
</feature>
<feature type="binding site" evidence="1">
    <location>
        <position position="255"/>
    </location>
    <ligand>
        <name>iminosuccinate</name>
        <dbReference type="ChEBI" id="CHEBI:77875"/>
    </ligand>
</feature>
<feature type="binding site" evidence="1">
    <location>
        <position position="309"/>
    </location>
    <ligand>
        <name>[4Fe-4S] cluster</name>
        <dbReference type="ChEBI" id="CHEBI:49883"/>
    </ligand>
</feature>
<sequence>MQSTIKPVEYDRPVAAGTVCGVGQAWAKVPDAPSAEERAALKERIKALLVREKAVLVAHYYVDAELQELADETGGCVADSLEMARFGRDHDAQTLIVAGVRFMGETAKILSPNKRILMPDLDATCSLDLGCPVDEFSAFCDAHPDRTVVVYANTSAAVKARADWMVTSSIGLEIVADLHARGEKIIWAPDRHLGSYIQKKTGADMLLWQGSCLVHDEFKGIELDLLRAEYPDAKVLVHPESPENVVAQADVVGSTTQLIDAAVKFNATHFIVATDLGILHKMQLAAPGKTFIAAPTAGNSATCKSCAHCPWMAMNGLANLADVLERGHNEIFVDPAIGERARLPIDRMLDFAAAHKKRVQASGDLQRDQQLFANVGAA</sequence>
<gene>
    <name evidence="1" type="primary">nadA</name>
    <name type="ordered locus">Bcep18194_A5838</name>
</gene>
<comment type="function">
    <text evidence="1">Catalyzes the condensation of iminoaspartate with dihydroxyacetone phosphate to form quinolinate.</text>
</comment>
<comment type="catalytic activity">
    <reaction evidence="1">
        <text>iminosuccinate + dihydroxyacetone phosphate = quinolinate + phosphate + 2 H2O + H(+)</text>
        <dbReference type="Rhea" id="RHEA:25888"/>
        <dbReference type="ChEBI" id="CHEBI:15377"/>
        <dbReference type="ChEBI" id="CHEBI:15378"/>
        <dbReference type="ChEBI" id="CHEBI:29959"/>
        <dbReference type="ChEBI" id="CHEBI:43474"/>
        <dbReference type="ChEBI" id="CHEBI:57642"/>
        <dbReference type="ChEBI" id="CHEBI:77875"/>
        <dbReference type="EC" id="2.5.1.72"/>
    </reaction>
    <physiologicalReaction direction="left-to-right" evidence="1">
        <dbReference type="Rhea" id="RHEA:25889"/>
    </physiologicalReaction>
</comment>
<comment type="cofactor">
    <cofactor evidence="1">
        <name>[4Fe-4S] cluster</name>
        <dbReference type="ChEBI" id="CHEBI:49883"/>
    </cofactor>
    <text evidence="1">Binds 1 [4Fe-4S] cluster per subunit.</text>
</comment>
<comment type="pathway">
    <text evidence="1">Cofactor biosynthesis; NAD(+) biosynthesis; quinolinate from iminoaspartate: step 1/1.</text>
</comment>
<comment type="subcellular location">
    <subcellularLocation>
        <location evidence="1">Cytoplasm</location>
    </subcellularLocation>
</comment>
<comment type="similarity">
    <text evidence="1">Belongs to the quinolinate synthase family. Type 1 subfamily.</text>
</comment>